<feature type="chain" id="PRO_1000189756" description="4-hydroxy-tetrahydrodipicolinate reductase">
    <location>
        <begin position="1"/>
        <end position="255"/>
    </location>
</feature>
<feature type="active site" description="Proton donor/acceptor" evidence="1">
    <location>
        <position position="145"/>
    </location>
</feature>
<feature type="active site" description="Proton donor" evidence="1">
    <location>
        <position position="149"/>
    </location>
</feature>
<feature type="binding site" evidence="1">
    <location>
        <begin position="9"/>
        <end position="14"/>
    </location>
    <ligand>
        <name>NAD(+)</name>
        <dbReference type="ChEBI" id="CHEBI:57540"/>
    </ligand>
</feature>
<feature type="binding site" evidence="1">
    <location>
        <position position="35"/>
    </location>
    <ligand>
        <name>NAD(+)</name>
        <dbReference type="ChEBI" id="CHEBI:57540"/>
    </ligand>
</feature>
<feature type="binding site" evidence="1">
    <location>
        <begin position="89"/>
        <end position="91"/>
    </location>
    <ligand>
        <name>NAD(+)</name>
        <dbReference type="ChEBI" id="CHEBI:57540"/>
    </ligand>
</feature>
<feature type="binding site" evidence="1">
    <location>
        <begin position="115"/>
        <end position="118"/>
    </location>
    <ligand>
        <name>NAD(+)</name>
        <dbReference type="ChEBI" id="CHEBI:57540"/>
    </ligand>
</feature>
<feature type="binding site" evidence="1">
    <location>
        <position position="146"/>
    </location>
    <ligand>
        <name>(S)-2,3,4,5-tetrahydrodipicolinate</name>
        <dbReference type="ChEBI" id="CHEBI:16845"/>
    </ligand>
</feature>
<feature type="binding site" evidence="1">
    <location>
        <begin position="155"/>
        <end position="156"/>
    </location>
    <ligand>
        <name>(S)-2,3,4,5-tetrahydrodipicolinate</name>
        <dbReference type="ChEBI" id="CHEBI:16845"/>
    </ligand>
</feature>
<reference key="1">
    <citation type="journal article" date="2010" name="Genome Biol.">
        <title>Structure and dynamics of the pan-genome of Streptococcus pneumoniae and closely related species.</title>
        <authorList>
            <person name="Donati C."/>
            <person name="Hiller N.L."/>
            <person name="Tettelin H."/>
            <person name="Muzzi A."/>
            <person name="Croucher N.J."/>
            <person name="Angiuoli S.V."/>
            <person name="Oggioni M."/>
            <person name="Dunning Hotopp J.C."/>
            <person name="Hu F.Z."/>
            <person name="Riley D.R."/>
            <person name="Covacci A."/>
            <person name="Mitchell T.J."/>
            <person name="Bentley S.D."/>
            <person name="Kilian M."/>
            <person name="Ehrlich G.D."/>
            <person name="Rappuoli R."/>
            <person name="Moxon E.R."/>
            <person name="Masignani V."/>
        </authorList>
    </citation>
    <scope>NUCLEOTIDE SEQUENCE [LARGE SCALE GENOMIC DNA]</scope>
    <source>
        <strain>70585</strain>
    </source>
</reference>
<protein>
    <recommendedName>
        <fullName evidence="1">4-hydroxy-tetrahydrodipicolinate reductase</fullName>
        <shortName evidence="1">HTPA reductase</shortName>
        <ecNumber evidence="1">1.17.1.8</ecNumber>
    </recommendedName>
</protein>
<name>DAPB_STRP7</name>
<comment type="function">
    <text evidence="1">Catalyzes the conversion of 4-hydroxy-tetrahydrodipicolinate (HTPA) to tetrahydrodipicolinate.</text>
</comment>
<comment type="catalytic activity">
    <reaction evidence="1">
        <text>(S)-2,3,4,5-tetrahydrodipicolinate + NAD(+) + H2O = (2S,4S)-4-hydroxy-2,3,4,5-tetrahydrodipicolinate + NADH + H(+)</text>
        <dbReference type="Rhea" id="RHEA:35323"/>
        <dbReference type="ChEBI" id="CHEBI:15377"/>
        <dbReference type="ChEBI" id="CHEBI:15378"/>
        <dbReference type="ChEBI" id="CHEBI:16845"/>
        <dbReference type="ChEBI" id="CHEBI:57540"/>
        <dbReference type="ChEBI" id="CHEBI:57945"/>
        <dbReference type="ChEBI" id="CHEBI:67139"/>
        <dbReference type="EC" id="1.17.1.8"/>
    </reaction>
</comment>
<comment type="catalytic activity">
    <reaction evidence="1">
        <text>(S)-2,3,4,5-tetrahydrodipicolinate + NADP(+) + H2O = (2S,4S)-4-hydroxy-2,3,4,5-tetrahydrodipicolinate + NADPH + H(+)</text>
        <dbReference type="Rhea" id="RHEA:35331"/>
        <dbReference type="ChEBI" id="CHEBI:15377"/>
        <dbReference type="ChEBI" id="CHEBI:15378"/>
        <dbReference type="ChEBI" id="CHEBI:16845"/>
        <dbReference type="ChEBI" id="CHEBI:57783"/>
        <dbReference type="ChEBI" id="CHEBI:58349"/>
        <dbReference type="ChEBI" id="CHEBI:67139"/>
        <dbReference type="EC" id="1.17.1.8"/>
    </reaction>
</comment>
<comment type="pathway">
    <text evidence="1">Amino-acid biosynthesis; L-lysine biosynthesis via DAP pathway; (S)-tetrahydrodipicolinate from L-aspartate: step 4/4.</text>
</comment>
<comment type="subcellular location">
    <subcellularLocation>
        <location evidence="1">Cytoplasm</location>
    </subcellularLocation>
</comment>
<comment type="similarity">
    <text evidence="1">Belongs to the DapB family.</text>
</comment>
<comment type="caution">
    <text evidence="2">Was originally thought to be a dihydrodipicolinate reductase (DHDPR), catalyzing the conversion of dihydrodipicolinate to tetrahydrodipicolinate. However, it was shown in E.coli that the substrate of the enzymatic reaction is not dihydrodipicolinate (DHDP) but in fact (2S,4S)-4-hydroxy-2,3,4,5-tetrahydrodipicolinic acid (HTPA), the product released by the DapA-catalyzed reaction.</text>
</comment>
<sequence>MSIRVIIAGFKGKMGQAACQMVLTDSDLDLVAVLDPFESESEWQGIPVFKDKADLAGFEADVWVDFTTPAVAYENTRFALENGFAPVVGTTGFTSEEIAELKEFSRAQDLGGLIAPNFALGAVLLMQFATQAAKYFPNVEIIELHHDKKKDAPSGTAIKTAELMAEVRESIQQGAADEEELIAGARGADFDGMRIHSVRLPGLVAHQEVIFGNQGEGLTLRHDSYDRISFMTGVNLGIKEVVKRHELVYGLEHLL</sequence>
<gene>
    <name evidence="1" type="primary">dapB</name>
    <name type="ordered locus">SP70585_1598</name>
</gene>
<keyword id="KW-0028">Amino-acid biosynthesis</keyword>
<keyword id="KW-0963">Cytoplasm</keyword>
<keyword id="KW-0220">Diaminopimelate biosynthesis</keyword>
<keyword id="KW-0457">Lysine biosynthesis</keyword>
<keyword id="KW-0520">NAD</keyword>
<keyword id="KW-0521">NADP</keyword>
<keyword id="KW-0560">Oxidoreductase</keyword>
<evidence type="ECO:0000255" key="1">
    <source>
        <dbReference type="HAMAP-Rule" id="MF_00102"/>
    </source>
</evidence>
<evidence type="ECO:0000305" key="2"/>
<proteinExistence type="inferred from homology"/>
<dbReference type="EC" id="1.17.1.8" evidence="1"/>
<dbReference type="EMBL" id="CP000918">
    <property type="protein sequence ID" value="ACO16128.1"/>
    <property type="molecule type" value="Genomic_DNA"/>
</dbReference>
<dbReference type="RefSeq" id="WP_000027904.1">
    <property type="nucleotide sequence ID" value="NC_012468.1"/>
</dbReference>
<dbReference type="SMR" id="C1C8E8"/>
<dbReference type="KEGG" id="snm:SP70585_1598"/>
<dbReference type="HOGENOM" id="CLU_047479_0_1_9"/>
<dbReference type="UniPathway" id="UPA00034">
    <property type="reaction ID" value="UER00018"/>
</dbReference>
<dbReference type="Proteomes" id="UP000002211">
    <property type="component" value="Chromosome"/>
</dbReference>
<dbReference type="GO" id="GO:0005829">
    <property type="term" value="C:cytosol"/>
    <property type="evidence" value="ECO:0007669"/>
    <property type="project" value="TreeGrafter"/>
</dbReference>
<dbReference type="GO" id="GO:0008839">
    <property type="term" value="F:4-hydroxy-tetrahydrodipicolinate reductase"/>
    <property type="evidence" value="ECO:0007669"/>
    <property type="project" value="UniProtKB-EC"/>
</dbReference>
<dbReference type="GO" id="GO:0051287">
    <property type="term" value="F:NAD binding"/>
    <property type="evidence" value="ECO:0007669"/>
    <property type="project" value="UniProtKB-UniRule"/>
</dbReference>
<dbReference type="GO" id="GO:0050661">
    <property type="term" value="F:NADP binding"/>
    <property type="evidence" value="ECO:0007669"/>
    <property type="project" value="UniProtKB-UniRule"/>
</dbReference>
<dbReference type="GO" id="GO:0016726">
    <property type="term" value="F:oxidoreductase activity, acting on CH or CH2 groups, NAD or NADP as acceptor"/>
    <property type="evidence" value="ECO:0007669"/>
    <property type="project" value="UniProtKB-UniRule"/>
</dbReference>
<dbReference type="GO" id="GO:0019877">
    <property type="term" value="P:diaminopimelate biosynthetic process"/>
    <property type="evidence" value="ECO:0007669"/>
    <property type="project" value="UniProtKB-UniRule"/>
</dbReference>
<dbReference type="GO" id="GO:0009089">
    <property type="term" value="P:lysine biosynthetic process via diaminopimelate"/>
    <property type="evidence" value="ECO:0007669"/>
    <property type="project" value="UniProtKB-UniRule"/>
</dbReference>
<dbReference type="CDD" id="cd02274">
    <property type="entry name" value="DHDPR_N"/>
    <property type="match status" value="1"/>
</dbReference>
<dbReference type="FunFam" id="3.30.360.10:FF:000009">
    <property type="entry name" value="4-hydroxy-tetrahydrodipicolinate reductase"/>
    <property type="match status" value="1"/>
</dbReference>
<dbReference type="Gene3D" id="3.30.360.10">
    <property type="entry name" value="Dihydrodipicolinate Reductase, domain 2"/>
    <property type="match status" value="1"/>
</dbReference>
<dbReference type="Gene3D" id="3.40.50.720">
    <property type="entry name" value="NAD(P)-binding Rossmann-like Domain"/>
    <property type="match status" value="1"/>
</dbReference>
<dbReference type="HAMAP" id="MF_00102">
    <property type="entry name" value="DapB"/>
    <property type="match status" value="1"/>
</dbReference>
<dbReference type="InterPro" id="IPR022663">
    <property type="entry name" value="DapB_C"/>
</dbReference>
<dbReference type="InterPro" id="IPR000846">
    <property type="entry name" value="DapB_N"/>
</dbReference>
<dbReference type="InterPro" id="IPR022664">
    <property type="entry name" value="DapB_N_CS"/>
</dbReference>
<dbReference type="InterPro" id="IPR023940">
    <property type="entry name" value="DHDPR_bac"/>
</dbReference>
<dbReference type="InterPro" id="IPR036291">
    <property type="entry name" value="NAD(P)-bd_dom_sf"/>
</dbReference>
<dbReference type="NCBIfam" id="TIGR00036">
    <property type="entry name" value="dapB"/>
    <property type="match status" value="1"/>
</dbReference>
<dbReference type="PANTHER" id="PTHR20836:SF0">
    <property type="entry name" value="4-HYDROXY-TETRAHYDRODIPICOLINATE REDUCTASE 1, CHLOROPLASTIC-RELATED"/>
    <property type="match status" value="1"/>
</dbReference>
<dbReference type="PANTHER" id="PTHR20836">
    <property type="entry name" value="DIHYDRODIPICOLINATE REDUCTASE"/>
    <property type="match status" value="1"/>
</dbReference>
<dbReference type="Pfam" id="PF05173">
    <property type="entry name" value="DapB_C"/>
    <property type="match status" value="1"/>
</dbReference>
<dbReference type="Pfam" id="PF01113">
    <property type="entry name" value="DapB_N"/>
    <property type="match status" value="1"/>
</dbReference>
<dbReference type="PIRSF" id="PIRSF000161">
    <property type="entry name" value="DHPR"/>
    <property type="match status" value="1"/>
</dbReference>
<dbReference type="SUPFAM" id="SSF55347">
    <property type="entry name" value="Glyceraldehyde-3-phosphate dehydrogenase-like, C-terminal domain"/>
    <property type="match status" value="1"/>
</dbReference>
<dbReference type="SUPFAM" id="SSF51735">
    <property type="entry name" value="NAD(P)-binding Rossmann-fold domains"/>
    <property type="match status" value="1"/>
</dbReference>
<dbReference type="PROSITE" id="PS01298">
    <property type="entry name" value="DAPB"/>
    <property type="match status" value="1"/>
</dbReference>
<organism>
    <name type="scientific">Streptococcus pneumoniae (strain 70585)</name>
    <dbReference type="NCBI Taxonomy" id="488221"/>
    <lineage>
        <taxon>Bacteria</taxon>
        <taxon>Bacillati</taxon>
        <taxon>Bacillota</taxon>
        <taxon>Bacilli</taxon>
        <taxon>Lactobacillales</taxon>
        <taxon>Streptococcaceae</taxon>
        <taxon>Streptococcus</taxon>
    </lineage>
</organism>
<accession>C1C8E8</accession>